<reference key="1">
    <citation type="journal article" date="2008" name="PLoS Genet.">
        <title>Complete genome sequence of the N2-fixing broad host range endophyte Klebsiella pneumoniae 342 and virulence predictions verified in mice.</title>
        <authorList>
            <person name="Fouts D.E."/>
            <person name="Tyler H.L."/>
            <person name="DeBoy R.T."/>
            <person name="Daugherty S."/>
            <person name="Ren Q."/>
            <person name="Badger J.H."/>
            <person name="Durkin A.S."/>
            <person name="Huot H."/>
            <person name="Shrivastava S."/>
            <person name="Kothari S."/>
            <person name="Dodson R.J."/>
            <person name="Mohamoud Y."/>
            <person name="Khouri H."/>
            <person name="Roesch L.F.W."/>
            <person name="Krogfelt K.A."/>
            <person name="Struve C."/>
            <person name="Triplett E.W."/>
            <person name="Methe B.A."/>
        </authorList>
    </citation>
    <scope>NUCLEOTIDE SEQUENCE [LARGE SCALE GENOMIC DNA]</scope>
    <source>
        <strain>342</strain>
    </source>
</reference>
<accession>B5Y008</accession>
<protein>
    <recommendedName>
        <fullName evidence="1">Oxygen-dependent choline dehydrogenase</fullName>
        <shortName evidence="1">CDH</shortName>
        <shortName evidence="1">CHD</shortName>
        <ecNumber evidence="1">1.1.99.1</ecNumber>
    </recommendedName>
    <alternativeName>
        <fullName evidence="1">Betaine aldehyde dehydrogenase</fullName>
        <shortName evidence="1">BADH</shortName>
        <ecNumber evidence="1">1.2.1.8</ecNumber>
    </alternativeName>
</protein>
<keyword id="KW-0274">FAD</keyword>
<keyword id="KW-0285">Flavoprotein</keyword>
<keyword id="KW-0520">NAD</keyword>
<keyword id="KW-0560">Oxidoreductase</keyword>
<proteinExistence type="inferred from homology"/>
<comment type="function">
    <text evidence="1">Involved in the biosynthesis of the osmoprotectant glycine betaine. Catalyzes the oxidation of choline to betaine aldehyde and betaine aldehyde to glycine betaine at the same rate.</text>
</comment>
<comment type="catalytic activity">
    <reaction evidence="1">
        <text>choline + A = betaine aldehyde + AH2</text>
        <dbReference type="Rhea" id="RHEA:17433"/>
        <dbReference type="ChEBI" id="CHEBI:13193"/>
        <dbReference type="ChEBI" id="CHEBI:15354"/>
        <dbReference type="ChEBI" id="CHEBI:15710"/>
        <dbReference type="ChEBI" id="CHEBI:17499"/>
        <dbReference type="EC" id="1.1.99.1"/>
    </reaction>
</comment>
<comment type="catalytic activity">
    <reaction evidence="1">
        <text>betaine aldehyde + NAD(+) + H2O = glycine betaine + NADH + 2 H(+)</text>
        <dbReference type="Rhea" id="RHEA:15305"/>
        <dbReference type="ChEBI" id="CHEBI:15377"/>
        <dbReference type="ChEBI" id="CHEBI:15378"/>
        <dbReference type="ChEBI" id="CHEBI:15710"/>
        <dbReference type="ChEBI" id="CHEBI:17750"/>
        <dbReference type="ChEBI" id="CHEBI:57540"/>
        <dbReference type="ChEBI" id="CHEBI:57945"/>
        <dbReference type="EC" id="1.2.1.8"/>
    </reaction>
</comment>
<comment type="cofactor">
    <cofactor evidence="1">
        <name>FAD</name>
        <dbReference type="ChEBI" id="CHEBI:57692"/>
    </cofactor>
</comment>
<comment type="pathway">
    <text evidence="1">Amine and polyamine biosynthesis; betaine biosynthesis via choline pathway; betaine aldehyde from choline (cytochrome c reductase route): step 1/1.</text>
</comment>
<comment type="similarity">
    <text evidence="1">Belongs to the GMC oxidoreductase family.</text>
</comment>
<feature type="chain" id="PRO_1000133333" description="Oxygen-dependent choline dehydrogenase">
    <location>
        <begin position="1"/>
        <end position="554"/>
    </location>
</feature>
<feature type="active site" description="Proton acceptor" evidence="1">
    <location>
        <position position="473"/>
    </location>
</feature>
<feature type="binding site" evidence="1">
    <location>
        <begin position="4"/>
        <end position="33"/>
    </location>
    <ligand>
        <name>FAD</name>
        <dbReference type="ChEBI" id="CHEBI:57692"/>
    </ligand>
</feature>
<name>BETA_KLEP3</name>
<gene>
    <name evidence="1" type="primary">betA</name>
    <name type="ordered locus">KPK_3995</name>
</gene>
<sequence>MQFDYIIIGAGSAGNVLATRLTEDPNTTVLLLEAGGPDYRFDFRTQMPAALAYPLQGKRYNWAYETEPEPYMNHRRMECGRGKGLGGSSLINGMCYIRGNAMDLDNWAKEPGLEHWSYLDCLPYYRKAETRDIGPNDYHGGDGPVSVTTPKPGNNPLFEAMVTAGVQAGYPRTDDLNGYQQEGFGPMDRTVTPQGRRASTARGYLDQARGRPNLTIRTHALTDHIIFAGKRAVGVEWLEGESTIPSKATANKEVLLCAGAIASPQILQRSGVGNPELLRQFDIPVVHDLPGVGENLQDHLEMYLQYECKEPVSLYPALQWWNQPKIGAEWLFGGTGIGASNQFEAGGFIRSRAEFAWPNIQYHFLPVAINYNGSNAVKEHGFQCHVGSMRSPSRGHVRLKSRDPHAHPAILFNYMSHEQDWQEFRDAIRITREIMNQPALDKYRGREISPGTECQSDAELDEFVRNHAETAFHPCGTCKMGYDEMAVVDGEGRVHGLEGVRVVDASIMPQIITGNLNATTIMIGEKMADAIRGRQPLPRSTAAYYVAGGAPVRR</sequence>
<evidence type="ECO:0000255" key="1">
    <source>
        <dbReference type="HAMAP-Rule" id="MF_00750"/>
    </source>
</evidence>
<dbReference type="EC" id="1.1.99.1" evidence="1"/>
<dbReference type="EC" id="1.2.1.8" evidence="1"/>
<dbReference type="EMBL" id="CP000964">
    <property type="protein sequence ID" value="ACI07067.1"/>
    <property type="molecule type" value="Genomic_DNA"/>
</dbReference>
<dbReference type="SMR" id="B5Y008"/>
<dbReference type="KEGG" id="kpe:KPK_3995"/>
<dbReference type="HOGENOM" id="CLU_002865_7_1_6"/>
<dbReference type="UniPathway" id="UPA00529">
    <property type="reaction ID" value="UER00385"/>
</dbReference>
<dbReference type="Proteomes" id="UP000001734">
    <property type="component" value="Chromosome"/>
</dbReference>
<dbReference type="GO" id="GO:0016020">
    <property type="term" value="C:membrane"/>
    <property type="evidence" value="ECO:0007669"/>
    <property type="project" value="TreeGrafter"/>
</dbReference>
<dbReference type="GO" id="GO:0008802">
    <property type="term" value="F:betaine-aldehyde dehydrogenase (NAD+) activity"/>
    <property type="evidence" value="ECO:0007669"/>
    <property type="project" value="UniProtKB-EC"/>
</dbReference>
<dbReference type="GO" id="GO:0008812">
    <property type="term" value="F:choline dehydrogenase activity"/>
    <property type="evidence" value="ECO:0007669"/>
    <property type="project" value="UniProtKB-UniRule"/>
</dbReference>
<dbReference type="GO" id="GO:0050660">
    <property type="term" value="F:flavin adenine dinucleotide binding"/>
    <property type="evidence" value="ECO:0007669"/>
    <property type="project" value="InterPro"/>
</dbReference>
<dbReference type="GO" id="GO:0019285">
    <property type="term" value="P:glycine betaine biosynthetic process from choline"/>
    <property type="evidence" value="ECO:0007669"/>
    <property type="project" value="UniProtKB-UniRule"/>
</dbReference>
<dbReference type="Gene3D" id="3.50.50.60">
    <property type="entry name" value="FAD/NAD(P)-binding domain"/>
    <property type="match status" value="1"/>
</dbReference>
<dbReference type="Gene3D" id="3.30.560.10">
    <property type="entry name" value="Glucose Oxidase, domain 3"/>
    <property type="match status" value="1"/>
</dbReference>
<dbReference type="HAMAP" id="MF_00750">
    <property type="entry name" value="Choline_dehydrogen"/>
    <property type="match status" value="1"/>
</dbReference>
<dbReference type="InterPro" id="IPR011533">
    <property type="entry name" value="BetA"/>
</dbReference>
<dbReference type="InterPro" id="IPR036188">
    <property type="entry name" value="FAD/NAD-bd_sf"/>
</dbReference>
<dbReference type="InterPro" id="IPR012132">
    <property type="entry name" value="GMC_OxRdtase"/>
</dbReference>
<dbReference type="InterPro" id="IPR000172">
    <property type="entry name" value="GMC_OxRdtase_N"/>
</dbReference>
<dbReference type="InterPro" id="IPR007867">
    <property type="entry name" value="GMC_OxRtase_C"/>
</dbReference>
<dbReference type="NCBIfam" id="TIGR01810">
    <property type="entry name" value="betA"/>
    <property type="match status" value="1"/>
</dbReference>
<dbReference type="NCBIfam" id="NF002550">
    <property type="entry name" value="PRK02106.1"/>
    <property type="match status" value="1"/>
</dbReference>
<dbReference type="PANTHER" id="PTHR11552:SF147">
    <property type="entry name" value="CHOLINE DEHYDROGENASE, MITOCHONDRIAL"/>
    <property type="match status" value="1"/>
</dbReference>
<dbReference type="PANTHER" id="PTHR11552">
    <property type="entry name" value="GLUCOSE-METHANOL-CHOLINE GMC OXIDOREDUCTASE"/>
    <property type="match status" value="1"/>
</dbReference>
<dbReference type="Pfam" id="PF05199">
    <property type="entry name" value="GMC_oxred_C"/>
    <property type="match status" value="1"/>
</dbReference>
<dbReference type="Pfam" id="PF00732">
    <property type="entry name" value="GMC_oxred_N"/>
    <property type="match status" value="1"/>
</dbReference>
<dbReference type="PIRSF" id="PIRSF000137">
    <property type="entry name" value="Alcohol_oxidase"/>
    <property type="match status" value="1"/>
</dbReference>
<dbReference type="SUPFAM" id="SSF54373">
    <property type="entry name" value="FAD-linked reductases, C-terminal domain"/>
    <property type="match status" value="1"/>
</dbReference>
<dbReference type="SUPFAM" id="SSF51905">
    <property type="entry name" value="FAD/NAD(P)-binding domain"/>
    <property type="match status" value="1"/>
</dbReference>
<dbReference type="PROSITE" id="PS00623">
    <property type="entry name" value="GMC_OXRED_1"/>
    <property type="match status" value="1"/>
</dbReference>
<dbReference type="PROSITE" id="PS00624">
    <property type="entry name" value="GMC_OXRED_2"/>
    <property type="match status" value="1"/>
</dbReference>
<organism>
    <name type="scientific">Klebsiella pneumoniae (strain 342)</name>
    <dbReference type="NCBI Taxonomy" id="507522"/>
    <lineage>
        <taxon>Bacteria</taxon>
        <taxon>Pseudomonadati</taxon>
        <taxon>Pseudomonadota</taxon>
        <taxon>Gammaproteobacteria</taxon>
        <taxon>Enterobacterales</taxon>
        <taxon>Enterobacteriaceae</taxon>
        <taxon>Klebsiella/Raoultella group</taxon>
        <taxon>Klebsiella</taxon>
        <taxon>Klebsiella pneumoniae complex</taxon>
    </lineage>
</organism>